<keyword id="KW-0238">DNA-binding</keyword>
<keyword id="KW-0479">Metal-binding</keyword>
<keyword id="KW-0539">Nucleus</keyword>
<keyword id="KW-1185">Reference proteome</keyword>
<keyword id="KW-0804">Transcription</keyword>
<keyword id="KW-0805">Transcription regulation</keyword>
<keyword id="KW-0862">Zinc</keyword>
<keyword id="KW-0863">Zinc-finger</keyword>
<organism>
    <name type="scientific">Arabidopsis thaliana</name>
    <name type="common">Mouse-ear cress</name>
    <dbReference type="NCBI Taxonomy" id="3702"/>
    <lineage>
        <taxon>Eukaryota</taxon>
        <taxon>Viridiplantae</taxon>
        <taxon>Streptophyta</taxon>
        <taxon>Embryophyta</taxon>
        <taxon>Tracheophyta</taxon>
        <taxon>Spermatophyta</taxon>
        <taxon>Magnoliopsida</taxon>
        <taxon>eudicotyledons</taxon>
        <taxon>Gunneridae</taxon>
        <taxon>Pentapetalae</taxon>
        <taxon>rosids</taxon>
        <taxon>malvids</taxon>
        <taxon>Brassicales</taxon>
        <taxon>Brassicaceae</taxon>
        <taxon>Camelineae</taxon>
        <taxon>Arabidopsis</taxon>
    </lineage>
</organism>
<gene>
    <name type="primary">SPL1</name>
    <name type="ordered locus">At2g47070/At2g47080</name>
    <name type="ORF">F14M4.9/F14M4.10</name>
</gene>
<proteinExistence type="evidence at protein level"/>
<accession>Q9SMX9</accession>
<accession>O80717</accession>
<accession>O80718</accession>
<accession>O82651</accession>
<accession>Q0WLD6</accession>
<dbReference type="EMBL" id="AJ011577">
    <property type="protein sequence ID" value="CAA09698.1"/>
    <property type="molecule type" value="Genomic_DNA"/>
</dbReference>
<dbReference type="EMBL" id="AJ011628">
    <property type="protein sequence ID" value="CAB56580.1"/>
    <property type="molecule type" value="mRNA"/>
</dbReference>
<dbReference type="EMBL" id="AJ011629">
    <property type="protein sequence ID" value="CAB56581.1"/>
    <property type="molecule type" value="mRNA"/>
</dbReference>
<dbReference type="EMBL" id="AC004411">
    <property type="protein sequence ID" value="AAC34220.1"/>
    <property type="status" value="ALT_SEQ"/>
    <property type="molecule type" value="Genomic_DNA"/>
</dbReference>
<dbReference type="EMBL" id="AC004411">
    <property type="protein sequence ID" value="AAC34221.1"/>
    <property type="status" value="ALT_SEQ"/>
    <property type="molecule type" value="Genomic_DNA"/>
</dbReference>
<dbReference type="EMBL" id="CP002685">
    <property type="protein sequence ID" value="AEC10798.1"/>
    <property type="molecule type" value="Genomic_DNA"/>
</dbReference>
<dbReference type="EMBL" id="AK230269">
    <property type="protein sequence ID" value="BAF02071.1"/>
    <property type="molecule type" value="mRNA"/>
</dbReference>
<dbReference type="PIR" id="T02179">
    <property type="entry name" value="T02179"/>
</dbReference>
<dbReference type="PIR" id="T02180">
    <property type="entry name" value="T02180"/>
</dbReference>
<dbReference type="PIR" id="T52601">
    <property type="entry name" value="T52601"/>
</dbReference>
<dbReference type="PIR" id="T52602">
    <property type="entry name" value="T52602"/>
</dbReference>
<dbReference type="RefSeq" id="NP_850468.1">
    <property type="nucleotide sequence ID" value="NM_180137.3"/>
</dbReference>
<dbReference type="SMR" id="Q9SMX9"/>
<dbReference type="BioGRID" id="4656">
    <property type="interactions" value="4"/>
</dbReference>
<dbReference type="FunCoup" id="Q9SMX9">
    <property type="interactions" value="2084"/>
</dbReference>
<dbReference type="IntAct" id="Q9SMX9">
    <property type="interactions" value="2"/>
</dbReference>
<dbReference type="STRING" id="3702.Q9SMX9"/>
<dbReference type="iPTMnet" id="Q9SMX9"/>
<dbReference type="PaxDb" id="3702-AT2G47070.1"/>
<dbReference type="ProteomicsDB" id="228395"/>
<dbReference type="EnsemblPlants" id="AT2G47070.1">
    <property type="protein sequence ID" value="AT2G47070.1"/>
    <property type="gene ID" value="AT2G47070"/>
</dbReference>
<dbReference type="GeneID" id="819321"/>
<dbReference type="Gramene" id="AT2G47070.1">
    <property type="protein sequence ID" value="AT2G47070.1"/>
    <property type="gene ID" value="AT2G47070"/>
</dbReference>
<dbReference type="KEGG" id="ath:AT2G47070"/>
<dbReference type="Araport" id="AT2G47070"/>
<dbReference type="TAIR" id="AT2G47070">
    <property type="gene designation" value="SPL1"/>
</dbReference>
<dbReference type="eggNOG" id="ENOG502QS71">
    <property type="taxonomic scope" value="Eukaryota"/>
</dbReference>
<dbReference type="HOGENOM" id="CLU_006255_3_0_1"/>
<dbReference type="InParanoid" id="Q9SMX9"/>
<dbReference type="OMA" id="VASWDGM"/>
<dbReference type="PhylomeDB" id="Q9SMX9"/>
<dbReference type="PRO" id="PR:Q9SMX9"/>
<dbReference type="Proteomes" id="UP000006548">
    <property type="component" value="Chromosome 2"/>
</dbReference>
<dbReference type="ExpressionAtlas" id="Q9SMX9">
    <property type="expression patterns" value="baseline and differential"/>
</dbReference>
<dbReference type="GO" id="GO:0005634">
    <property type="term" value="C:nucleus"/>
    <property type="evidence" value="ECO:0007669"/>
    <property type="project" value="UniProtKB-SubCell"/>
</dbReference>
<dbReference type="GO" id="GO:0003677">
    <property type="term" value="F:DNA binding"/>
    <property type="evidence" value="ECO:0007669"/>
    <property type="project" value="UniProtKB-KW"/>
</dbReference>
<dbReference type="GO" id="GO:0003700">
    <property type="term" value="F:DNA-binding transcription factor activity"/>
    <property type="evidence" value="ECO:0000250"/>
    <property type="project" value="TAIR"/>
</dbReference>
<dbReference type="GO" id="GO:0008270">
    <property type="term" value="F:zinc ion binding"/>
    <property type="evidence" value="ECO:0007669"/>
    <property type="project" value="UniProtKB-KW"/>
</dbReference>
<dbReference type="GO" id="GO:0006355">
    <property type="term" value="P:regulation of DNA-templated transcription"/>
    <property type="evidence" value="ECO:0000304"/>
    <property type="project" value="TAIR"/>
</dbReference>
<dbReference type="FunFam" id="1.25.40.20:FF:000420">
    <property type="entry name" value="Squamosa promoter binding protein-like 1"/>
    <property type="match status" value="1"/>
</dbReference>
<dbReference type="FunFam" id="4.10.1100.10:FF:000001">
    <property type="entry name" value="Squamosa promoter-binding-like protein 14"/>
    <property type="match status" value="1"/>
</dbReference>
<dbReference type="Gene3D" id="1.25.40.20">
    <property type="entry name" value="Ankyrin repeat-containing domain"/>
    <property type="match status" value="1"/>
</dbReference>
<dbReference type="Gene3D" id="4.10.1100.10">
    <property type="entry name" value="Transcription factor, SBP-box domain"/>
    <property type="match status" value="1"/>
</dbReference>
<dbReference type="InterPro" id="IPR036770">
    <property type="entry name" value="Ankyrin_rpt-contain_sf"/>
</dbReference>
<dbReference type="InterPro" id="IPR044817">
    <property type="entry name" value="SBP-like"/>
</dbReference>
<dbReference type="InterPro" id="IPR004333">
    <property type="entry name" value="SBP_dom"/>
</dbReference>
<dbReference type="InterPro" id="IPR036893">
    <property type="entry name" value="SBP_sf"/>
</dbReference>
<dbReference type="PANTHER" id="PTHR31251:SF132">
    <property type="entry name" value="SQUAMOSA PROMOTER-BINDING-LIKE PROTEIN 1-RELATED"/>
    <property type="match status" value="1"/>
</dbReference>
<dbReference type="PANTHER" id="PTHR31251">
    <property type="entry name" value="SQUAMOSA PROMOTER-BINDING-LIKE PROTEIN 4"/>
    <property type="match status" value="1"/>
</dbReference>
<dbReference type="Pfam" id="PF03110">
    <property type="entry name" value="SBP"/>
    <property type="match status" value="1"/>
</dbReference>
<dbReference type="SUPFAM" id="SSF48403">
    <property type="entry name" value="Ankyrin repeat"/>
    <property type="match status" value="1"/>
</dbReference>
<dbReference type="SUPFAM" id="SSF103612">
    <property type="entry name" value="SBT domain"/>
    <property type="match status" value="1"/>
</dbReference>
<dbReference type="PROSITE" id="PS51141">
    <property type="entry name" value="ZF_SBP"/>
    <property type="match status" value="1"/>
</dbReference>
<protein>
    <recommendedName>
        <fullName>Squamosa promoter-binding-like protein 1</fullName>
    </recommendedName>
</protein>
<evidence type="ECO:0000250" key="1"/>
<evidence type="ECO:0000255" key="2"/>
<evidence type="ECO:0000255" key="3">
    <source>
        <dbReference type="PROSITE-ProRule" id="PRU00470"/>
    </source>
</evidence>
<evidence type="ECO:0000256" key="4">
    <source>
        <dbReference type="SAM" id="MobiDB-lite"/>
    </source>
</evidence>
<evidence type="ECO:0000269" key="5">
    <source>
    </source>
</evidence>
<evidence type="ECO:0000269" key="6">
    <source>
    </source>
</evidence>
<evidence type="ECO:0000305" key="7"/>
<name>SPL1_ARATH</name>
<comment type="function">
    <text evidence="5 6">Trans-acting factor that binds specifically to the consensus nucleotide sequence 5'-TNCGTACAA-3' of AP1 promoter. Binds specifically to the 5'-GTAC-3' core sequence.</text>
</comment>
<comment type="cofactor">
    <cofactor evidence="1">
        <name>Zn(2+)</name>
        <dbReference type="ChEBI" id="CHEBI:29105"/>
    </cofactor>
    <text evidence="1">Binds 2 Zn(2+) ions per subunit.</text>
</comment>
<comment type="subcellular location">
    <subcellularLocation>
        <location evidence="7">Nucleus</location>
    </subcellularLocation>
</comment>
<comment type="developmental stage">
    <text evidence="5">Expressed constitutively during plant development.</text>
</comment>
<comment type="domain">
    <text>The SBP-type zinc finger is required for the binding to DNA.</text>
</comment>
<comment type="sequence caution" evidence="7">
    <conflict type="erroneous gene model prediction">
        <sequence resource="EMBL-CDS" id="AAC34220"/>
    </conflict>
    <text>Was originally thought to correspond to two different genes At2g47070 and At2g47080.</text>
</comment>
<comment type="sequence caution" evidence="7">
    <conflict type="erroneous gene model prediction">
        <sequence resource="EMBL-CDS" id="AAC34221"/>
    </conflict>
    <text>Was originally thought to correspond to two different genes At2g47070 and At2g47080.</text>
</comment>
<reference key="1">
    <citation type="journal article" date="1999" name="Gene">
        <title>Molecular characterization of the Arabidopsis SBP-box genes.</title>
        <authorList>
            <person name="Cardon G.H."/>
            <person name="Hoehmann S."/>
            <person name="Klein J."/>
            <person name="Nettesheim K."/>
            <person name="Saedler H."/>
            <person name="Huijser P."/>
        </authorList>
    </citation>
    <scope>NUCLEOTIDE SEQUENCE [GENOMIC DNA / MRNA]</scope>
    <scope>FUNCTION</scope>
    <scope>DEVELOPMENTAL STAGE</scope>
    <source>
        <strain>cv. Columbia</strain>
        <strain>cv. Landsberg erecta</strain>
        <tissue>Flower</tissue>
    </source>
</reference>
<reference key="2">
    <citation type="journal article" date="1999" name="Nature">
        <title>Sequence and analysis of chromosome 2 of the plant Arabidopsis thaliana.</title>
        <authorList>
            <person name="Lin X."/>
            <person name="Kaul S."/>
            <person name="Rounsley S.D."/>
            <person name="Shea T.P."/>
            <person name="Benito M.-I."/>
            <person name="Town C.D."/>
            <person name="Fujii C.Y."/>
            <person name="Mason T.M."/>
            <person name="Bowman C.L."/>
            <person name="Barnstead M.E."/>
            <person name="Feldblyum T.V."/>
            <person name="Buell C.R."/>
            <person name="Ketchum K.A."/>
            <person name="Lee J.J."/>
            <person name="Ronning C.M."/>
            <person name="Koo H.L."/>
            <person name="Moffat K.S."/>
            <person name="Cronin L.A."/>
            <person name="Shen M."/>
            <person name="Pai G."/>
            <person name="Van Aken S."/>
            <person name="Umayam L."/>
            <person name="Tallon L.J."/>
            <person name="Gill J.E."/>
            <person name="Adams M.D."/>
            <person name="Carrera A.J."/>
            <person name="Creasy T.H."/>
            <person name="Goodman H.M."/>
            <person name="Somerville C.R."/>
            <person name="Copenhaver G.P."/>
            <person name="Preuss D."/>
            <person name="Nierman W.C."/>
            <person name="White O."/>
            <person name="Eisen J.A."/>
            <person name="Salzberg S.L."/>
            <person name="Fraser C.M."/>
            <person name="Venter J.C."/>
        </authorList>
    </citation>
    <scope>NUCLEOTIDE SEQUENCE [LARGE SCALE GENOMIC DNA]</scope>
    <source>
        <strain>cv. Columbia</strain>
    </source>
</reference>
<reference key="3">
    <citation type="journal article" date="2017" name="Plant J.">
        <title>Araport11: a complete reannotation of the Arabidopsis thaliana reference genome.</title>
        <authorList>
            <person name="Cheng C.Y."/>
            <person name="Krishnakumar V."/>
            <person name="Chan A.P."/>
            <person name="Thibaud-Nissen F."/>
            <person name="Schobel S."/>
            <person name="Town C.D."/>
        </authorList>
    </citation>
    <scope>GENOME REANNOTATION</scope>
    <source>
        <strain>cv. Columbia</strain>
    </source>
</reference>
<reference key="4">
    <citation type="submission" date="2006-07" db="EMBL/GenBank/DDBJ databases">
        <title>Large-scale analysis of RIKEN Arabidopsis full-length (RAFL) cDNAs.</title>
        <authorList>
            <person name="Totoki Y."/>
            <person name="Seki M."/>
            <person name="Ishida J."/>
            <person name="Nakajima M."/>
            <person name="Enju A."/>
            <person name="Kamiya A."/>
            <person name="Narusaka M."/>
            <person name="Shin-i T."/>
            <person name="Nakagawa M."/>
            <person name="Sakamoto N."/>
            <person name="Oishi K."/>
            <person name="Kohara Y."/>
            <person name="Kobayashi M."/>
            <person name="Toyoda A."/>
            <person name="Sakaki Y."/>
            <person name="Sakurai T."/>
            <person name="Iida K."/>
            <person name="Akiyama K."/>
            <person name="Satou M."/>
            <person name="Toyoda T."/>
            <person name="Konagaya A."/>
            <person name="Carninci P."/>
            <person name="Kawai J."/>
            <person name="Hayashizaki Y."/>
            <person name="Shinozaki K."/>
        </authorList>
    </citation>
    <scope>NUCLEOTIDE SEQUENCE [LARGE SCALE MRNA]</scope>
    <source>
        <strain>cv. Columbia</strain>
    </source>
</reference>
<reference key="5">
    <citation type="journal article" date="2005" name="J. Mol. Biol.">
        <title>Functional dissection of the plant-specific SBP-domain: overlap of the DNA-binding and nuclear localization domains.</title>
        <authorList>
            <person name="Birkenbihl R.P."/>
            <person name="Jach G."/>
            <person name="Saedler H."/>
            <person name="Huijser P."/>
        </authorList>
    </citation>
    <scope>FUNCTION</scope>
    <scope>REGION</scope>
    <scope>MUTAGENESIS OF CYS-111; HIS-122; HIS-131; CYS-147; ARG-152; HIS-154; ARG-164 AND CYS-166</scope>
</reference>
<feature type="chain" id="PRO_0000132722" description="Squamosa promoter-binding-like protein 1">
    <location>
        <begin position="1"/>
        <end position="881"/>
    </location>
</feature>
<feature type="zinc finger region" description="SBP-type" evidence="3">
    <location>
        <begin position="103"/>
        <end position="180"/>
    </location>
</feature>
<feature type="region of interest" description="Disordered" evidence="4">
    <location>
        <begin position="49"/>
        <end position="69"/>
    </location>
</feature>
<feature type="region of interest" description="Sufficient and necessary for DNA binding">
    <location>
        <begin position="96"/>
        <end position="187"/>
    </location>
</feature>
<feature type="region of interest" description="Disordered" evidence="4">
    <location>
        <begin position="170"/>
        <end position="193"/>
    </location>
</feature>
<feature type="region of interest" description="Disordered" evidence="4">
    <location>
        <begin position="274"/>
        <end position="358"/>
    </location>
</feature>
<feature type="short sequence motif" description="Bipartite nuclear localization signal" evidence="2">
    <location>
        <begin position="163"/>
        <end position="179"/>
    </location>
</feature>
<feature type="compositionally biased region" description="Low complexity" evidence="4">
    <location>
        <begin position="53"/>
        <end position="62"/>
    </location>
</feature>
<feature type="compositionally biased region" description="Basic residues" evidence="4">
    <location>
        <begin position="170"/>
        <end position="179"/>
    </location>
</feature>
<feature type="compositionally biased region" description="Polar residues" evidence="4">
    <location>
        <begin position="275"/>
        <end position="284"/>
    </location>
</feature>
<feature type="compositionally biased region" description="Basic and acidic residues" evidence="4">
    <location>
        <begin position="285"/>
        <end position="295"/>
    </location>
</feature>
<feature type="compositionally biased region" description="Polar residues" evidence="4">
    <location>
        <begin position="319"/>
        <end position="338"/>
    </location>
</feature>
<feature type="compositionally biased region" description="Low complexity" evidence="4">
    <location>
        <begin position="339"/>
        <end position="356"/>
    </location>
</feature>
<feature type="binding site" evidence="3">
    <location>
        <position position="106"/>
    </location>
    <ligand>
        <name>Zn(2+)</name>
        <dbReference type="ChEBI" id="CHEBI:29105"/>
        <label>1</label>
    </ligand>
</feature>
<feature type="binding site" evidence="3">
    <location>
        <position position="111"/>
    </location>
    <ligand>
        <name>Zn(2+)</name>
        <dbReference type="ChEBI" id="CHEBI:29105"/>
        <label>1</label>
    </ligand>
</feature>
<feature type="binding site" evidence="3">
    <location>
        <position position="128"/>
    </location>
    <ligand>
        <name>Zn(2+)</name>
        <dbReference type="ChEBI" id="CHEBI:29105"/>
        <label>1</label>
    </ligand>
</feature>
<feature type="binding site" evidence="3">
    <location>
        <position position="131"/>
    </location>
    <ligand>
        <name>Zn(2+)</name>
        <dbReference type="ChEBI" id="CHEBI:29105"/>
        <label>1</label>
    </ligand>
</feature>
<feature type="binding site" evidence="3">
    <location>
        <position position="147"/>
    </location>
    <ligand>
        <name>Zn(2+)</name>
        <dbReference type="ChEBI" id="CHEBI:29105"/>
        <label>2</label>
    </ligand>
</feature>
<feature type="binding site" evidence="3">
    <location>
        <position position="150"/>
    </location>
    <ligand>
        <name>Zn(2+)</name>
        <dbReference type="ChEBI" id="CHEBI:29105"/>
        <label>2</label>
    </ligand>
</feature>
<feature type="binding site" evidence="3">
    <location>
        <position position="154"/>
    </location>
    <ligand>
        <name>Zn(2+)</name>
        <dbReference type="ChEBI" id="CHEBI:29105"/>
        <label>2</label>
    </ligand>
</feature>
<feature type="binding site" evidence="3">
    <location>
        <position position="166"/>
    </location>
    <ligand>
        <name>Zn(2+)</name>
        <dbReference type="ChEBI" id="CHEBI:29105"/>
        <label>2</label>
    </ligand>
</feature>
<feature type="mutagenesis site" description="Almost complete loss of DNA binding." evidence="6">
    <original>C</original>
    <variation>A</variation>
    <location>
        <position position="111"/>
    </location>
</feature>
<feature type="mutagenesis site" description="Slight decrease in DNA binding efficiency." evidence="6">
    <original>H</original>
    <variation>A</variation>
    <location>
        <position position="122"/>
    </location>
</feature>
<feature type="mutagenesis site" description="Almost complete loss of DNA binding." evidence="6">
    <original>H</original>
    <variation>A</variation>
    <location>
        <position position="131"/>
    </location>
</feature>
<feature type="mutagenesis site" description="Complete loss of DNA binding." evidence="6">
    <original>C</original>
    <variation>A</variation>
    <location>
        <position position="147"/>
    </location>
</feature>
<feature type="mutagenesis site" description="No effect on DNA binding efficiency." evidence="6">
    <original>R</original>
    <variation>Q</variation>
    <location>
        <position position="152"/>
    </location>
</feature>
<feature type="mutagenesis site" description="Reduction of DNA binding efficiency by half." evidence="6">
    <original>H</original>
    <variation>A</variation>
    <location>
        <position position="154"/>
    </location>
</feature>
<feature type="mutagenesis site" description="Slight decrease in DNA binding efficiency." evidence="6">
    <original>R</original>
    <variation>Q</variation>
    <location>
        <position position="164"/>
    </location>
</feature>
<feature type="mutagenesis site" description="Complete loss of DNA binding." evidence="6">
    <original>C</original>
    <variation>A</variation>
    <location>
        <position position="166"/>
    </location>
</feature>
<feature type="sequence conflict" description="In Ref. 1; CAB56580." evidence="7" ref="1">
    <original>G</original>
    <variation>E</variation>
    <location>
        <position position="140"/>
    </location>
</feature>
<feature type="sequence conflict" description="In Ref. 1; CAB56580." evidence="7" ref="1">
    <original>Q</original>
    <variation>R</variation>
    <location>
        <position position="502"/>
    </location>
</feature>
<sequence length="881" mass="98460">MEARIDEGGEAQQFYGSVGKRSVEWDLNDWKWDGDLFLATQTTRGRQFFPLGNSSNSSSSCSDEGNDKKRRAVAIQGDTNGALTLNLNGESDGLFPAKKTKSGAVCQVENCEADLSKVKDYHRRHKVCEMHSKATSATVGGILQRFCQQCSRFHLLQEFDEGKRSCRRRLAGHNKRRRKTNPEPGANGNPSDDHSSNYLLITLLKILSNMHNHTGDQDLMSHLLKSLVSHAGEQLGKNLVELLLQGGGSQGSLNIGNSALLGIEQAPQEELKQFSARQDGTATENRSEKQVKMNDFDLNDIYIDSDDTDVERSPPPTNPATSSLDYPSWIHQSSPPQTSRNSDSASDQSPSSSSEDAQMRTGRIVFKLFGKEPNEFPIVLRGQILDWLSHSPTDMESYIRPGCIVLTIYLRQAETAWEELSDDLGFSLGKLLDLSDDPLWTTGWIYVRVQNQLAFVYNGQVVVDTSLSLKSRDYSHIISVKPLAIAATEKAQFTVKGMNLRQRGTRLLCSVEGKYLIQETTHDSTTREDDDFKDNSEIVECVNFSCDMPILSGRGFMEIEDQGLSSSFFPFLVVEDDDVCSEIRILETTLEFTGTDSAKQAMDFIHEIGWLLHRSKLGESDPNPGVFPLIRFQWLIEFSMDREWCAVIRKLLNMFFDGAVGEFSSSSNATLSELCLLHRAVRKNSKPMVEMLLRYIPKQQRNSLFRPDAAGPAGLTPLHIAAGKDGSEDVLDALTEDPAMVGIEAWKTCRDSTGFTPEDYARLRGHFSYIHLIQRKINKKSTTEDHVVVNIPVSFSDREQKEPKSGPMASALEITQIPCKLCDHKLVYGTTRRSVAYRPAMLSMVAIAAVCVCVALLFKSCPEVLYVFQPFRWELLDYGTS</sequence>